<dbReference type="EMBL" id="Y00102">
    <property type="protein sequence ID" value="CAA68287.1"/>
    <property type="molecule type" value="mRNA"/>
</dbReference>
<dbReference type="EMBL" id="X61098">
    <property type="protein sequence ID" value="CAA43411.1"/>
    <property type="molecule type" value="mRNA"/>
</dbReference>
<dbReference type="PIR" id="S07379">
    <property type="entry name" value="QRRTE"/>
</dbReference>
<dbReference type="RefSeq" id="NP_036821.1">
    <property type="nucleotide sequence ID" value="NM_012689.1"/>
</dbReference>
<dbReference type="SMR" id="P06211"/>
<dbReference type="BioGRID" id="247000">
    <property type="interactions" value="11"/>
</dbReference>
<dbReference type="CORUM" id="P06211"/>
<dbReference type="DIP" id="DIP-41279N"/>
<dbReference type="FunCoup" id="P06211">
    <property type="interactions" value="466"/>
</dbReference>
<dbReference type="IntAct" id="P06211">
    <property type="interactions" value="6"/>
</dbReference>
<dbReference type="MINT" id="P06211"/>
<dbReference type="STRING" id="10116.ENSRNOP00000026350"/>
<dbReference type="BindingDB" id="P06211"/>
<dbReference type="ChEMBL" id="CHEMBL2724"/>
<dbReference type="DrugCentral" id="P06211"/>
<dbReference type="GuidetoPHARMACOLOGY" id="620"/>
<dbReference type="GlyCosmos" id="P06211">
    <property type="glycosylation" value="2 sites, No reported glycans"/>
</dbReference>
<dbReference type="GlyGen" id="P06211">
    <property type="glycosylation" value="2 sites"/>
</dbReference>
<dbReference type="iPTMnet" id="P06211"/>
<dbReference type="PhosphoSitePlus" id="P06211"/>
<dbReference type="SwissPalm" id="P06211"/>
<dbReference type="PaxDb" id="10116-ENSRNOP00000026350"/>
<dbReference type="GeneID" id="24890"/>
<dbReference type="KEGG" id="rno:24890"/>
<dbReference type="UCSC" id="RGD:2581">
    <property type="organism name" value="rat"/>
</dbReference>
<dbReference type="AGR" id="RGD:2581"/>
<dbReference type="CTD" id="2099"/>
<dbReference type="RGD" id="2581">
    <property type="gene designation" value="Esr1"/>
</dbReference>
<dbReference type="eggNOG" id="KOG3575">
    <property type="taxonomic scope" value="Eukaryota"/>
</dbReference>
<dbReference type="InParanoid" id="P06211"/>
<dbReference type="OrthoDB" id="5799427at2759"/>
<dbReference type="PhylomeDB" id="P06211"/>
<dbReference type="Reactome" id="R-RNO-1251985">
    <property type="pathway name" value="Nuclear signaling by ERBB4"/>
</dbReference>
<dbReference type="Reactome" id="R-RNO-1257604">
    <property type="pathway name" value="PIP3 activates AKT signaling"/>
</dbReference>
<dbReference type="Reactome" id="R-RNO-383280">
    <property type="pathway name" value="Nuclear Receptor transcription pathway"/>
</dbReference>
<dbReference type="Reactome" id="R-RNO-4090294">
    <property type="pathway name" value="SUMOylation of intracellular receptors"/>
</dbReference>
<dbReference type="Reactome" id="R-RNO-5689896">
    <property type="pathway name" value="Ovarian tumor domain proteases"/>
</dbReference>
<dbReference type="Reactome" id="R-RNO-6811558">
    <property type="pathway name" value="PI5P, PP2A and IER3 Regulate PI3K/AKT Signaling"/>
</dbReference>
<dbReference type="Reactome" id="R-RNO-8866910">
    <property type="pathway name" value="TFAP2 (AP-2) family regulates transcription of growth factors and their receptors"/>
</dbReference>
<dbReference type="Reactome" id="R-RNO-8931987">
    <property type="pathway name" value="RUNX1 regulates estrogen receptor mediated transcription"/>
</dbReference>
<dbReference type="Reactome" id="R-RNO-8939211">
    <property type="pathway name" value="ESR-mediated signaling"/>
</dbReference>
<dbReference type="Reactome" id="R-RNO-9009391">
    <property type="pathway name" value="Extra-nuclear estrogen signaling"/>
</dbReference>
<dbReference type="Reactome" id="R-RNO-9018519">
    <property type="pathway name" value="Estrogen-dependent gene expression"/>
</dbReference>
<dbReference type="Reactome" id="R-RNO-9841251">
    <property type="pathway name" value="Mitochondrial unfolded protein response (UPRmt)"/>
</dbReference>
<dbReference type="PRO" id="PR:P06211"/>
<dbReference type="Proteomes" id="UP000002494">
    <property type="component" value="Unplaced"/>
</dbReference>
<dbReference type="GO" id="GO:0000785">
    <property type="term" value="C:chromatin"/>
    <property type="evidence" value="ECO:0000266"/>
    <property type="project" value="RGD"/>
</dbReference>
<dbReference type="GO" id="GO:0005737">
    <property type="term" value="C:cytoplasm"/>
    <property type="evidence" value="ECO:0000266"/>
    <property type="project" value="RGD"/>
</dbReference>
<dbReference type="GO" id="GO:0000791">
    <property type="term" value="C:euchromatin"/>
    <property type="evidence" value="ECO:0000266"/>
    <property type="project" value="RGD"/>
</dbReference>
<dbReference type="GO" id="GO:0005794">
    <property type="term" value="C:Golgi apparatus"/>
    <property type="evidence" value="ECO:0007669"/>
    <property type="project" value="UniProtKB-SubCell"/>
</dbReference>
<dbReference type="GO" id="GO:0005634">
    <property type="term" value="C:nucleus"/>
    <property type="evidence" value="ECO:0000314"/>
    <property type="project" value="UniProtKB"/>
</dbReference>
<dbReference type="GO" id="GO:0043204">
    <property type="term" value="C:perikaryon"/>
    <property type="evidence" value="ECO:0000314"/>
    <property type="project" value="RGD"/>
</dbReference>
<dbReference type="GO" id="GO:0048471">
    <property type="term" value="C:perinuclear region of cytoplasm"/>
    <property type="evidence" value="ECO:0000314"/>
    <property type="project" value="RGD"/>
</dbReference>
<dbReference type="GO" id="GO:0005886">
    <property type="term" value="C:plasma membrane"/>
    <property type="evidence" value="ECO:0000266"/>
    <property type="project" value="RGD"/>
</dbReference>
<dbReference type="GO" id="GO:0032991">
    <property type="term" value="C:protein-containing complex"/>
    <property type="evidence" value="ECO:0000314"/>
    <property type="project" value="RGD"/>
</dbReference>
<dbReference type="GO" id="GO:0030315">
    <property type="term" value="C:T-tubule"/>
    <property type="evidence" value="ECO:0000314"/>
    <property type="project" value="RGD"/>
</dbReference>
<dbReference type="GO" id="GO:0043195">
    <property type="term" value="C:terminal bouton"/>
    <property type="evidence" value="ECO:0000314"/>
    <property type="project" value="RGD"/>
</dbReference>
<dbReference type="GO" id="GO:0005667">
    <property type="term" value="C:transcription regulator complex"/>
    <property type="evidence" value="ECO:0000266"/>
    <property type="project" value="RGD"/>
</dbReference>
<dbReference type="GO" id="GO:0071889">
    <property type="term" value="F:14-3-3 protein binding"/>
    <property type="evidence" value="ECO:0000266"/>
    <property type="project" value="RGD"/>
</dbReference>
<dbReference type="GO" id="GO:0051117">
    <property type="term" value="F:ATPase binding"/>
    <property type="evidence" value="ECO:0000266"/>
    <property type="project" value="RGD"/>
</dbReference>
<dbReference type="GO" id="GO:0008013">
    <property type="term" value="F:beta-catenin binding"/>
    <property type="evidence" value="ECO:0000266"/>
    <property type="project" value="RGD"/>
</dbReference>
<dbReference type="GO" id="GO:0005516">
    <property type="term" value="F:calmodulin binding"/>
    <property type="evidence" value="ECO:0000266"/>
    <property type="project" value="RGD"/>
</dbReference>
<dbReference type="GO" id="GO:0003682">
    <property type="term" value="F:chromatin binding"/>
    <property type="evidence" value="ECO:0000250"/>
    <property type="project" value="UniProtKB"/>
</dbReference>
<dbReference type="GO" id="GO:0003677">
    <property type="term" value="F:DNA binding"/>
    <property type="evidence" value="ECO:0000315"/>
    <property type="project" value="RGD"/>
</dbReference>
<dbReference type="GO" id="GO:0001228">
    <property type="term" value="F:DNA-binding transcription activator activity, RNA polymerase II-specific"/>
    <property type="evidence" value="ECO:0000266"/>
    <property type="project" value="RGD"/>
</dbReference>
<dbReference type="GO" id="GO:0019899">
    <property type="term" value="F:enzyme binding"/>
    <property type="evidence" value="ECO:0000353"/>
    <property type="project" value="RGD"/>
</dbReference>
<dbReference type="GO" id="GO:0099130">
    <property type="term" value="F:estrogen binding"/>
    <property type="evidence" value="ECO:0000314"/>
    <property type="project" value="RGD"/>
</dbReference>
<dbReference type="GO" id="GO:0034056">
    <property type="term" value="F:estrogen response element binding"/>
    <property type="evidence" value="ECO:0000266"/>
    <property type="project" value="RGD"/>
</dbReference>
<dbReference type="GO" id="GO:0042562">
    <property type="term" value="F:hormone binding"/>
    <property type="evidence" value="ECO:0000314"/>
    <property type="project" value="RGD"/>
</dbReference>
<dbReference type="GO" id="GO:0042802">
    <property type="term" value="F:identical protein binding"/>
    <property type="evidence" value="ECO:0000266"/>
    <property type="project" value="RGD"/>
</dbReference>
<dbReference type="GO" id="GO:0030284">
    <property type="term" value="F:nuclear estrogen receptor activity"/>
    <property type="evidence" value="ECO:0000266"/>
    <property type="project" value="RGD"/>
</dbReference>
<dbReference type="GO" id="GO:0030331">
    <property type="term" value="F:nuclear estrogen receptor binding"/>
    <property type="evidence" value="ECO:0000266"/>
    <property type="project" value="RGD"/>
</dbReference>
<dbReference type="GO" id="GO:0004879">
    <property type="term" value="F:nuclear receptor activity"/>
    <property type="evidence" value="ECO:0000266"/>
    <property type="project" value="RGD"/>
</dbReference>
<dbReference type="GO" id="GO:0003707">
    <property type="term" value="F:nuclear steroid receptor activity"/>
    <property type="evidence" value="ECO:0000314"/>
    <property type="project" value="RGD"/>
</dbReference>
<dbReference type="GO" id="GO:0036312">
    <property type="term" value="F:phosphatidylinositol 3-kinase regulatory subunit binding"/>
    <property type="evidence" value="ECO:0000353"/>
    <property type="project" value="RGD"/>
</dbReference>
<dbReference type="GO" id="GO:1990841">
    <property type="term" value="F:promoter-specific chromatin binding"/>
    <property type="evidence" value="ECO:0000314"/>
    <property type="project" value="RGD"/>
</dbReference>
<dbReference type="GO" id="GO:0019901">
    <property type="term" value="F:protein kinase binding"/>
    <property type="evidence" value="ECO:0000266"/>
    <property type="project" value="RGD"/>
</dbReference>
<dbReference type="GO" id="GO:0044877">
    <property type="term" value="F:protein-containing complex binding"/>
    <property type="evidence" value="ECO:0000314"/>
    <property type="project" value="RGD"/>
</dbReference>
<dbReference type="GO" id="GO:0000978">
    <property type="term" value="F:RNA polymerase II cis-regulatory region sequence-specific DNA binding"/>
    <property type="evidence" value="ECO:0000266"/>
    <property type="project" value="RGD"/>
</dbReference>
<dbReference type="GO" id="GO:0043565">
    <property type="term" value="F:sequence-specific DNA binding"/>
    <property type="evidence" value="ECO:0000266"/>
    <property type="project" value="RGD"/>
</dbReference>
<dbReference type="GO" id="GO:1990837">
    <property type="term" value="F:sequence-specific double-stranded DNA binding"/>
    <property type="evidence" value="ECO:0000266"/>
    <property type="project" value="RGD"/>
</dbReference>
<dbReference type="GO" id="GO:0005496">
    <property type="term" value="F:steroid binding"/>
    <property type="evidence" value="ECO:0000314"/>
    <property type="project" value="UniProtKB"/>
</dbReference>
<dbReference type="GO" id="GO:0017025">
    <property type="term" value="F:TBP-class protein binding"/>
    <property type="evidence" value="ECO:0000266"/>
    <property type="project" value="RGD"/>
</dbReference>
<dbReference type="GO" id="GO:0001093">
    <property type="term" value="F:TFIIB-class transcription factor binding"/>
    <property type="evidence" value="ECO:0000266"/>
    <property type="project" value="RGD"/>
</dbReference>
<dbReference type="GO" id="GO:0001223">
    <property type="term" value="F:transcription coactivator binding"/>
    <property type="evidence" value="ECO:0000353"/>
    <property type="project" value="RGD"/>
</dbReference>
<dbReference type="GO" id="GO:0001221">
    <property type="term" value="F:transcription coregulator binding"/>
    <property type="evidence" value="ECO:0000266"/>
    <property type="project" value="RGD"/>
</dbReference>
<dbReference type="GO" id="GO:0001222">
    <property type="term" value="F:transcription corepressor binding"/>
    <property type="evidence" value="ECO:0000266"/>
    <property type="project" value="RGD"/>
</dbReference>
<dbReference type="GO" id="GO:0031798">
    <property type="term" value="F:type 1 metabotropic glutamate receptor binding"/>
    <property type="evidence" value="ECO:0000353"/>
    <property type="project" value="RGD"/>
</dbReference>
<dbReference type="GO" id="GO:0008270">
    <property type="term" value="F:zinc ion binding"/>
    <property type="evidence" value="ECO:0007669"/>
    <property type="project" value="UniProtKB-KW"/>
</dbReference>
<dbReference type="GO" id="GO:0008209">
    <property type="term" value="P:androgen metabolic process"/>
    <property type="evidence" value="ECO:0000266"/>
    <property type="project" value="RGD"/>
</dbReference>
<dbReference type="GO" id="GO:0001547">
    <property type="term" value="P:antral ovarian follicle growth"/>
    <property type="evidence" value="ECO:0000266"/>
    <property type="project" value="RGD"/>
</dbReference>
<dbReference type="GO" id="GO:1990375">
    <property type="term" value="P:baculum development"/>
    <property type="evidence" value="ECO:0000270"/>
    <property type="project" value="RGD"/>
</dbReference>
<dbReference type="GO" id="GO:0071392">
    <property type="term" value="P:cellular response to estradiol stimulus"/>
    <property type="evidence" value="ECO:0000314"/>
    <property type="project" value="UniProtKB"/>
</dbReference>
<dbReference type="GO" id="GO:0071391">
    <property type="term" value="P:cellular response to estrogen stimulus"/>
    <property type="evidence" value="ECO:0000270"/>
    <property type="project" value="RGD"/>
</dbReference>
<dbReference type="GO" id="GO:1904568">
    <property type="term" value="P:cellular response to wortmannin"/>
    <property type="evidence" value="ECO:0000270"/>
    <property type="project" value="RGD"/>
</dbReference>
<dbReference type="GO" id="GO:0046697">
    <property type="term" value="P:decidualization"/>
    <property type="evidence" value="ECO:0000270"/>
    <property type="project" value="RGD"/>
</dbReference>
<dbReference type="GO" id="GO:0002064">
    <property type="term" value="P:epithelial cell development"/>
    <property type="evidence" value="ECO:0000266"/>
    <property type="project" value="RGD"/>
</dbReference>
<dbReference type="GO" id="GO:0060750">
    <property type="term" value="P:epithelial cell proliferation involved in mammary gland duct elongation"/>
    <property type="evidence" value="ECO:0000266"/>
    <property type="project" value="RGD"/>
</dbReference>
<dbReference type="GO" id="GO:0030520">
    <property type="term" value="P:estrogen receptor signaling pathway"/>
    <property type="evidence" value="ECO:0000266"/>
    <property type="project" value="RGD"/>
</dbReference>
<dbReference type="GO" id="GO:0048144">
    <property type="term" value="P:fibroblast proliferation"/>
    <property type="evidence" value="ECO:0000266"/>
    <property type="project" value="RGD"/>
</dbReference>
<dbReference type="GO" id="GO:0008584">
    <property type="term" value="P:male gonad development"/>
    <property type="evidence" value="ECO:0000270"/>
    <property type="project" value="RGD"/>
</dbReference>
<dbReference type="GO" id="GO:0060749">
    <property type="term" value="P:mammary gland alveolus development"/>
    <property type="evidence" value="ECO:0000266"/>
    <property type="project" value="RGD"/>
</dbReference>
<dbReference type="GO" id="GO:0060745">
    <property type="term" value="P:mammary gland branching involved in pregnancy"/>
    <property type="evidence" value="ECO:0000266"/>
    <property type="project" value="RGD"/>
</dbReference>
<dbReference type="GO" id="GO:0043124">
    <property type="term" value="P:negative regulation of canonical NF-kappaB signal transduction"/>
    <property type="evidence" value="ECO:0000250"/>
    <property type="project" value="UniProtKB"/>
</dbReference>
<dbReference type="GO" id="GO:0046325">
    <property type="term" value="P:negative regulation of D-glucose import"/>
    <property type="evidence" value="ECO:0000314"/>
    <property type="project" value="RGD"/>
</dbReference>
<dbReference type="GO" id="GO:0043433">
    <property type="term" value="P:negative regulation of DNA-binding transcription factor activity"/>
    <property type="evidence" value="ECO:0000250"/>
    <property type="project" value="UniProtKB"/>
</dbReference>
<dbReference type="GO" id="GO:0010629">
    <property type="term" value="P:negative regulation of gene expression"/>
    <property type="evidence" value="ECO:0000266"/>
    <property type="project" value="RGD"/>
</dbReference>
<dbReference type="GO" id="GO:1902894">
    <property type="term" value="P:negative regulation of miRNA transcription"/>
    <property type="evidence" value="ECO:0000266"/>
    <property type="project" value="RGD"/>
</dbReference>
<dbReference type="GO" id="GO:0043524">
    <property type="term" value="P:negative regulation of neuron apoptotic process"/>
    <property type="evidence" value="ECO:0000314"/>
    <property type="project" value="RGD"/>
</dbReference>
<dbReference type="GO" id="GO:0034392">
    <property type="term" value="P:negative regulation of smooth muscle cell apoptotic process"/>
    <property type="evidence" value="ECO:0000315"/>
    <property type="project" value="UniProtKB"/>
</dbReference>
<dbReference type="GO" id="GO:0048662">
    <property type="term" value="P:negative regulation of smooth muscle cell proliferation"/>
    <property type="evidence" value="ECO:0000315"/>
    <property type="project" value="RGD"/>
</dbReference>
<dbReference type="GO" id="GO:0000122">
    <property type="term" value="P:negative regulation of transcription by RNA polymerase II"/>
    <property type="evidence" value="ECO:0000266"/>
    <property type="project" value="RGD"/>
</dbReference>
<dbReference type="GO" id="GO:0090209">
    <property type="term" value="P:negative regulation of triglyceride metabolic process"/>
    <property type="evidence" value="ECO:0000314"/>
    <property type="project" value="RGD"/>
</dbReference>
<dbReference type="GO" id="GO:0030518">
    <property type="term" value="P:nuclear receptor-mediated steroid hormone signaling pathway"/>
    <property type="evidence" value="ECO:0000314"/>
    <property type="project" value="UniProtKB"/>
</dbReference>
<dbReference type="GO" id="GO:0002076">
    <property type="term" value="P:osteoblast development"/>
    <property type="evidence" value="ECO:0000270"/>
    <property type="project" value="RGD"/>
</dbReference>
<dbReference type="GO" id="GO:0007200">
    <property type="term" value="P:phospholipase C-activating G protein-coupled receptor signaling pathway"/>
    <property type="evidence" value="ECO:0000314"/>
    <property type="project" value="UniProtKB"/>
</dbReference>
<dbReference type="GO" id="GO:0007204">
    <property type="term" value="P:positive regulation of cytosolic calcium ion concentration"/>
    <property type="evidence" value="ECO:0000314"/>
    <property type="project" value="UniProtKB"/>
</dbReference>
<dbReference type="GO" id="GO:0051091">
    <property type="term" value="P:positive regulation of DNA-binding transcription factor activity"/>
    <property type="evidence" value="ECO:0000250"/>
    <property type="project" value="UniProtKB"/>
</dbReference>
<dbReference type="GO" id="GO:0045893">
    <property type="term" value="P:positive regulation of DNA-templated transcription"/>
    <property type="evidence" value="ECO:0000250"/>
    <property type="project" value="UniProtKB"/>
</dbReference>
<dbReference type="GO" id="GO:0045742">
    <property type="term" value="P:positive regulation of epidermal growth factor receptor signaling pathway"/>
    <property type="evidence" value="ECO:0000315"/>
    <property type="project" value="RGD"/>
</dbReference>
<dbReference type="GO" id="GO:0050679">
    <property type="term" value="P:positive regulation of epithelial cell proliferation"/>
    <property type="evidence" value="ECO:0000315"/>
    <property type="project" value="RGD"/>
</dbReference>
<dbReference type="GO" id="GO:0070374">
    <property type="term" value="P:positive regulation of ERK1 and ERK2 cascade"/>
    <property type="evidence" value="ECO:0000314"/>
    <property type="project" value="RGD"/>
</dbReference>
<dbReference type="GO" id="GO:0048146">
    <property type="term" value="P:positive regulation of fibroblast proliferation"/>
    <property type="evidence" value="ECO:0000266"/>
    <property type="project" value="RGD"/>
</dbReference>
<dbReference type="GO" id="GO:0045429">
    <property type="term" value="P:positive regulation of nitric oxide biosynthetic process"/>
    <property type="evidence" value="ECO:0000250"/>
    <property type="project" value="UniProtKB"/>
</dbReference>
<dbReference type="GO" id="GO:0051000">
    <property type="term" value="P:positive regulation of nitric-oxide synthase activity"/>
    <property type="evidence" value="ECO:0000250"/>
    <property type="project" value="UniProtKB"/>
</dbReference>
<dbReference type="GO" id="GO:0045944">
    <property type="term" value="P:positive regulation of transcription by RNA polymerase II"/>
    <property type="evidence" value="ECO:0000266"/>
    <property type="project" value="RGD"/>
</dbReference>
<dbReference type="GO" id="GO:0060527">
    <property type="term" value="P:prostate epithelial cord arborization involved in prostate glandular acinus morphogenesis"/>
    <property type="evidence" value="ECO:0000266"/>
    <property type="project" value="RGD"/>
</dbReference>
<dbReference type="GO" id="GO:0060523">
    <property type="term" value="P:prostate epithelial cord elongation"/>
    <property type="evidence" value="ECO:0000266"/>
    <property type="project" value="RGD"/>
</dbReference>
<dbReference type="GO" id="GO:0071168">
    <property type="term" value="P:protein localization to chromatin"/>
    <property type="evidence" value="ECO:0000266"/>
    <property type="project" value="RGD"/>
</dbReference>
<dbReference type="GO" id="GO:0060687">
    <property type="term" value="P:regulation of branching involved in prostate gland morphogenesis"/>
    <property type="evidence" value="ECO:0000266"/>
    <property type="project" value="RGD"/>
</dbReference>
<dbReference type="GO" id="GO:0006355">
    <property type="term" value="P:regulation of DNA-templated transcription"/>
    <property type="evidence" value="ECO:0000266"/>
    <property type="project" value="RGD"/>
</dbReference>
<dbReference type="GO" id="GO:1904035">
    <property type="term" value="P:regulation of epithelial cell apoptotic process"/>
    <property type="evidence" value="ECO:0000266"/>
    <property type="project" value="RGD"/>
</dbReference>
<dbReference type="GO" id="GO:0050727">
    <property type="term" value="P:regulation of inflammatory response"/>
    <property type="evidence" value="ECO:0000266"/>
    <property type="project" value="RGD"/>
</dbReference>
<dbReference type="GO" id="GO:0034121">
    <property type="term" value="P:regulation of toll-like receptor signaling pathway"/>
    <property type="evidence" value="ECO:0000266"/>
    <property type="project" value="RGD"/>
</dbReference>
<dbReference type="GO" id="GO:0006357">
    <property type="term" value="P:regulation of transcription by RNA polymerase II"/>
    <property type="evidence" value="ECO:0000318"/>
    <property type="project" value="GO_Central"/>
</dbReference>
<dbReference type="GO" id="GO:0032355">
    <property type="term" value="P:response to estradiol"/>
    <property type="evidence" value="ECO:0000270"/>
    <property type="project" value="RGD"/>
</dbReference>
<dbReference type="GO" id="GO:0043627">
    <property type="term" value="P:response to estrogen"/>
    <property type="evidence" value="ECO:0000266"/>
    <property type="project" value="RGD"/>
</dbReference>
<dbReference type="GO" id="GO:0051123">
    <property type="term" value="P:RNA polymerase II preinitiation complex assembly"/>
    <property type="evidence" value="ECO:0000266"/>
    <property type="project" value="RGD"/>
</dbReference>
<dbReference type="GO" id="GO:0060009">
    <property type="term" value="P:Sertoli cell development"/>
    <property type="evidence" value="ECO:0000270"/>
    <property type="project" value="RGD"/>
</dbReference>
<dbReference type="GO" id="GO:0060011">
    <property type="term" value="P:Sertoli cell proliferation"/>
    <property type="evidence" value="ECO:0000315"/>
    <property type="project" value="RGD"/>
</dbReference>
<dbReference type="GO" id="GO:0048863">
    <property type="term" value="P:stem cell differentiation"/>
    <property type="evidence" value="ECO:0000266"/>
    <property type="project" value="RGD"/>
</dbReference>
<dbReference type="GO" id="GO:0006366">
    <property type="term" value="P:transcription by RNA polymerase II"/>
    <property type="evidence" value="ECO:0000266"/>
    <property type="project" value="RGD"/>
</dbReference>
<dbReference type="GO" id="GO:0060065">
    <property type="term" value="P:uterus development"/>
    <property type="evidence" value="ECO:0000266"/>
    <property type="project" value="RGD"/>
</dbReference>
<dbReference type="GO" id="GO:0060068">
    <property type="term" value="P:vagina development"/>
    <property type="evidence" value="ECO:0000266"/>
    <property type="project" value="RGD"/>
</dbReference>
<dbReference type="CDD" id="cd07171">
    <property type="entry name" value="NR_DBD_ER"/>
    <property type="match status" value="1"/>
</dbReference>
<dbReference type="CDD" id="cd06949">
    <property type="entry name" value="NR_LBD_ER"/>
    <property type="match status" value="1"/>
</dbReference>
<dbReference type="FunFam" id="1.10.565.10:FF:000010">
    <property type="entry name" value="Estrogen receptor"/>
    <property type="match status" value="1"/>
</dbReference>
<dbReference type="FunFam" id="3.30.50.10:FF:000014">
    <property type="entry name" value="Estrogen receptor beta"/>
    <property type="match status" value="1"/>
</dbReference>
<dbReference type="Gene3D" id="3.30.50.10">
    <property type="entry name" value="Erythroid Transcription Factor GATA-1, subunit A"/>
    <property type="match status" value="1"/>
</dbReference>
<dbReference type="Gene3D" id="1.10.565.10">
    <property type="entry name" value="Retinoid X Receptor"/>
    <property type="match status" value="1"/>
</dbReference>
<dbReference type="InterPro" id="IPR024178">
    <property type="entry name" value="Est_rcpt/est-rel_rcp"/>
</dbReference>
<dbReference type="InterPro" id="IPR001292">
    <property type="entry name" value="Estr_rcpt"/>
</dbReference>
<dbReference type="InterPro" id="IPR046944">
    <property type="entry name" value="Estr_rcpt_N"/>
</dbReference>
<dbReference type="InterPro" id="IPR035500">
    <property type="entry name" value="NHR-like_dom_sf"/>
</dbReference>
<dbReference type="InterPro" id="IPR000536">
    <property type="entry name" value="Nucl_hrmn_rcpt_lig-bd"/>
</dbReference>
<dbReference type="InterPro" id="IPR050200">
    <property type="entry name" value="Nuclear_hormone_rcpt_NR3"/>
</dbReference>
<dbReference type="InterPro" id="IPR001723">
    <property type="entry name" value="Nuclear_hrmn_rcpt"/>
</dbReference>
<dbReference type="InterPro" id="IPR024736">
    <property type="entry name" value="Oestrogen-typ_rcpt_final_C_dom"/>
</dbReference>
<dbReference type="InterPro" id="IPR001628">
    <property type="entry name" value="Znf_hrmn_rcpt"/>
</dbReference>
<dbReference type="InterPro" id="IPR013088">
    <property type="entry name" value="Znf_NHR/GATA"/>
</dbReference>
<dbReference type="PANTHER" id="PTHR48092">
    <property type="entry name" value="KNIRPS-RELATED PROTEIN-RELATED"/>
    <property type="match status" value="1"/>
</dbReference>
<dbReference type="Pfam" id="PF12743">
    <property type="entry name" value="ESR1_C"/>
    <property type="match status" value="1"/>
</dbReference>
<dbReference type="Pfam" id="PF00104">
    <property type="entry name" value="Hormone_recep"/>
    <property type="match status" value="1"/>
</dbReference>
<dbReference type="Pfam" id="PF02159">
    <property type="entry name" value="Oest_recep"/>
    <property type="match status" value="1"/>
</dbReference>
<dbReference type="Pfam" id="PF00105">
    <property type="entry name" value="zf-C4"/>
    <property type="match status" value="1"/>
</dbReference>
<dbReference type="PIRSF" id="PIRSF500101">
    <property type="entry name" value="ER-a"/>
    <property type="match status" value="1"/>
</dbReference>
<dbReference type="PIRSF" id="PIRSF002527">
    <property type="entry name" value="ER-like_NR"/>
    <property type="match status" value="1"/>
</dbReference>
<dbReference type="PRINTS" id="PR00543">
    <property type="entry name" value="OESTROGENR"/>
</dbReference>
<dbReference type="PRINTS" id="PR00398">
    <property type="entry name" value="STRDHORMONER"/>
</dbReference>
<dbReference type="PRINTS" id="PR00047">
    <property type="entry name" value="STROIDFINGER"/>
</dbReference>
<dbReference type="SMART" id="SM00430">
    <property type="entry name" value="HOLI"/>
    <property type="match status" value="1"/>
</dbReference>
<dbReference type="SMART" id="SM00399">
    <property type="entry name" value="ZnF_C4"/>
    <property type="match status" value="1"/>
</dbReference>
<dbReference type="SUPFAM" id="SSF57716">
    <property type="entry name" value="Glucocorticoid receptor-like (DNA-binding domain)"/>
    <property type="match status" value="1"/>
</dbReference>
<dbReference type="SUPFAM" id="SSF48508">
    <property type="entry name" value="Nuclear receptor ligand-binding domain"/>
    <property type="match status" value="1"/>
</dbReference>
<dbReference type="PROSITE" id="PS51843">
    <property type="entry name" value="NR_LBD"/>
    <property type="match status" value="1"/>
</dbReference>
<dbReference type="PROSITE" id="PS00031">
    <property type="entry name" value="NUCLEAR_REC_DBD_1"/>
    <property type="match status" value="1"/>
</dbReference>
<dbReference type="PROSITE" id="PS51030">
    <property type="entry name" value="NUCLEAR_REC_DBD_2"/>
    <property type="match status" value="1"/>
</dbReference>
<keyword id="KW-0010">Activator</keyword>
<keyword id="KW-1003">Cell membrane</keyword>
<keyword id="KW-0963">Cytoplasm</keyword>
<keyword id="KW-0238">DNA-binding</keyword>
<keyword id="KW-0325">Glycoprotein</keyword>
<keyword id="KW-0333">Golgi apparatus</keyword>
<keyword id="KW-0446">Lipid-binding</keyword>
<keyword id="KW-0449">Lipoprotein</keyword>
<keyword id="KW-0472">Membrane</keyword>
<keyword id="KW-0479">Metal-binding</keyword>
<keyword id="KW-0488">Methylation</keyword>
<keyword id="KW-0539">Nucleus</keyword>
<keyword id="KW-0564">Palmitate</keyword>
<keyword id="KW-0597">Phosphoprotein</keyword>
<keyword id="KW-0675">Receptor</keyword>
<keyword id="KW-1185">Reference proteome</keyword>
<keyword id="KW-0754">Steroid-binding</keyword>
<keyword id="KW-0804">Transcription</keyword>
<keyword id="KW-0805">Transcription regulation</keyword>
<keyword id="KW-0832">Ubl conjugation</keyword>
<keyword id="KW-0862">Zinc</keyword>
<keyword id="KW-0863">Zinc-finger</keyword>
<reference key="1">
    <citation type="submission" date="1987-03" db="EMBL/GenBank/DDBJ databases">
        <authorList>
            <person name="Muramatsu M."/>
        </authorList>
    </citation>
    <scope>NUCLEOTIDE SEQUENCE [MRNA]</scope>
    <source>
        <strain>Wistar</strain>
    </source>
</reference>
<reference key="2">
    <citation type="journal article" date="1987" name="Nucleic Acids Res.">
        <title>Molecular cloning and characterization of rat estrogen receptor cDNA.</title>
        <authorList>
            <person name="Koike S."/>
            <person name="Sakai M."/>
        </authorList>
    </citation>
    <scope>NUCLEOTIDE SEQUENCE [MRNA]</scope>
</reference>
<reference key="3">
    <citation type="submission" date="1991-06" db="EMBL/GenBank/DDBJ databases">
        <authorList>
            <person name="Maggi A.M.A."/>
        </authorList>
    </citation>
    <scope>NUCLEOTIDE SEQUENCE [MRNA]</scope>
    <source>
        <strain>Sprague-Dawley</strain>
        <tissue>Uterus</tissue>
    </source>
</reference>
<reference key="4">
    <citation type="journal article" date="2002" name="Mol. Endocrinol.">
        <title>The activating enzyme of NEDD8 inhibits steroid receptor function.</title>
        <authorList>
            <person name="Fan M."/>
            <person name="Long X."/>
            <person name="Bailey J.A."/>
            <person name="Reed C.A."/>
            <person name="Osborne E."/>
            <person name="Gize E.A."/>
            <person name="Kirk E.A."/>
            <person name="Bigsby R.M."/>
            <person name="Nephew K.P."/>
        </authorList>
    </citation>
    <scope>INTERACTION WITH UBE1C</scope>
</reference>
<reference key="5">
    <citation type="journal article" date="2007" name="Biochem. Biophys. Res. Commun.">
        <title>The NMDAR subunit NR3A interacts with microtubule-associated protein 1S in the brain.</title>
        <authorList>
            <person name="Eriksson M."/>
            <person name="Samuelsson H."/>
            <person name="Samuelsson E.-B."/>
            <person name="Liu L."/>
            <person name="McKeehan W.L."/>
            <person name="Benedikz E."/>
            <person name="Sundstroem E."/>
        </authorList>
    </citation>
    <scope>INTERACTION WITH MAP1S</scope>
</reference>
<reference key="6">
    <citation type="journal article" date="2009" name="Hum. Mol. Genet.">
        <title>Functional interaction of DYX1C1 with estrogen receptors suggests involvement of hormonal pathways in dyslexia.</title>
        <authorList>
            <person name="Massinen S."/>
            <person name="Tammimies K."/>
            <person name="Tapia-Paez I."/>
            <person name="Matsson H."/>
            <person name="Hokkanen M.E."/>
            <person name="Soederberg O."/>
            <person name="Landegren U."/>
            <person name="Castren E."/>
            <person name="Gustafsson J.A."/>
            <person name="Treuter E."/>
            <person name="Kere J."/>
        </authorList>
    </citation>
    <scope>INTERACTION WITH DNAAF4</scope>
</reference>
<reference key="7">
    <citation type="journal article" date="2011" name="Proc. Natl. Acad. Sci. U.S.A.">
        <title>C terminus of Hsc70-interacting protein (CHIP)-mediated degradation of hippocampal estrogen receptor-alpha and the critical period hypothesis of estrogen neuroprotection.</title>
        <authorList>
            <person name="Zhang Q.G."/>
            <person name="Han D."/>
            <person name="Wang R.M."/>
            <person name="Dong Y."/>
            <person name="Yang F."/>
            <person name="Vadlamudi R.K."/>
            <person name="Brann D.W."/>
        </authorList>
    </citation>
    <scope>FUNCTION</scope>
    <scope>INTERACTION WITH BAG1; NEDD8 AND STUB1</scope>
    <scope>TISSUE SPECIFICITY</scope>
    <scope>UBIQUITINATION</scope>
</reference>
<gene>
    <name type="primary">Esr1</name>
    <name type="synonym">Esr</name>
    <name type="synonym">Estr</name>
    <name type="synonym">Nr3a1</name>
</gene>
<protein>
    <recommendedName>
        <fullName>Estrogen receptor</fullName>
        <shortName>ER</shortName>
    </recommendedName>
    <alternativeName>
        <fullName>ER-alpha</fullName>
    </alternativeName>
    <alternativeName>
        <fullName>Estradiol receptor</fullName>
    </alternativeName>
    <alternativeName>
        <fullName>Nuclear receptor subfamily 3 group A member 1</fullName>
    </alternativeName>
</protein>
<accession>P06211</accession>
<comment type="function">
    <text evidence="1 9">Nuclear hormone receptor. The steroid hormones and their receptors are involved in the regulation of eukaryotic gene expression and affect cellular proliferation and differentiation in target tissues. Ligand-dependent nuclear transactivation involves either direct homodimer binding to a palindromic estrogen response element (ERE) sequence or association with other DNA-binding transcription factors, such as AP-1/c-Jun, c-Fos, ATF-2, Sp1 and Sp3, to mediate ERE-independent signaling. Ligand binding induces a conformational change allowing subsequent or combinatorial association with multiprotein coactivator complexes through LXXLL motifs of their respective components. Mutual transrepression occurs between the estrogen receptor (ER) and NF-kappa-B in a cell-type specific manner. Decreases NF-kappa-B DNA-binding activity and inhibits NF-kappa-B-mediated transcription from the IL6 promoter and displace RELA/p65 and associated coregulators from the promoter. Recruited to the NF-kappa-B response element of the CCL2 and IL8 promoters and can displace CREBBP. Present with NF-kappa-B components RELA/p65 and NFKB1/p50 on ERE sequences. Can also act synergistically with NF-kappa-B to activate transcription involving respective recruitment adjacent response elements; the function involves CREBBP. Can activate the transcriptional activity of TFF1. Also mediates membrane-initiated estrogen signaling involving various kinase cascades. Essential for MTA1-mediated transcriptional regulation of BRCA1 and BCAS3 (By similarity). Maintains neuronal survival in response to ischemic reperfusion injury when in the presence of circulating estradiol (17-beta-estradiol/E2) (PubMed:21808025).</text>
</comment>
<comment type="subunit">
    <text evidence="2 3 7 8 9">Interacts with BCAS3. Binds DNA as a homodimer (By similarity). Can form a heterodimer with ESR2 (By similarity). Interacts with coactivator NCOA5. Interacts with PELP1, the interaction is enhanced by 17-beta-estradiol; the interaction increases ESR1 transcriptional activity (By similarity). Interacts with NCOA7; the interaction is ligand-inducible. Interacts with AKAP13, CUEDC2, HEXIM1, KDM5A, MAP1S, SMARD1, and UBE1C. Interacts with MUC1; the interaction is stimulated by 7 beta-estradiol (E2) and enhances ESR1-mediated transcription. Interacts with DNTTIP2, and UIMC1. Interacts with KMT2D/MLL2. Interacts with ATAD2; the interaction is enhanced by estradiol. Interacts with KIF18A and LDB1. Interacts with RLIM (via its C-terminus). Interacts with MACROD1. Interacts with SH2D4A and PLCG. Interacts with SH2D4A; the interaction blocks binding to PLCG and inhibits estrogen-induced cell proliferation. Interacts with DYNLL1. Interacts with CCDC62; the interaction requires estradiol and appears to enhance the transcription of target genes. Interacts with NR2C1; the interaction prevents homodimerization of ESR1 and suppresses its transcriptional activity and cell growth. Interacts with DNAAF4. Interacts with PRMT2. Interacts with RBFOX2. Interacts with EP300; the interaction is estrogen-dependent and enhanced by CITED1. Interacts with CITED1; the interaction is estrogen-dependent (By similarity). Interacts with FAM120B, FOXL2, PHB2 and SLC30A9. Interacts with coactivators NCOA3 and NCOA6. Interacts with STK3/MST2 only in the presence of SAV1 and vice-versa. Binds to CSNK1D. Interacts with NCOA2; NCOA2 can interact with ESR1 AF-1 and AF-2 domains simultaneously and mediate their transcriptional synergy. Interacts with DDX5. Interacts with NCOA1; the interaction seems to require a self-association of N-terminal and C-terminal regions. Interacts with ZNF366, DDX17, NFKB1, RELA, SP1 and SP3. Interacts with NRIP1 (By similarity). Interacts with GPER1; the interaction occurs in an estrogen-dependent manner (By similarity). Interacts with TRIP4 (ufmylated); estrogen dependent (By similarity). Interacts with LMTK3; the interaction phosphorylates ESR1 (in vitro) and protects it against proteasomal degradation. Interacts with CCAR2 (via N-terminus) in a ligand-independent manner. Interacts with ZFHX3 (By similarity). Interacts with SFR1 in a ligand-dependent and -independent manner (By similarity). Interacts with DCAF13, LATS1 and DCAF1; regulates ESR1 ubiquitination and ubiquitin-mediated proteasomal degradation. Interacts (via DNA-binding domain) with POU4F2 (C-terminus); this interaction increases the estrogen receptor ESR1 transcriptional activity in a DNA- and ligand 17-beta-estradiol-independent manner (By similarity). Interacts with ESRRB isoform 1 (By similarity). Interacts with UBE3A and WBP2 (By similarity). Interacts with GTF2B (By similarity). Interacts with RBM39 (By similarity). In the absence of hormonal ligand, interacts with TACC1 (By similarity). Interacts with PI3KR1 or PI3KR2 and PTK2/FAK1 (By similarity). Interacts with SRC (By similarity). Interacts with BAG1; the interaction is promoted in the absence of estradiol (17-beta-estradiol/E2) (PubMed:21808025). Interacts with and ubiquitinated by STUB1; the interaction is promoted in the absence of estradiol (17-beta-estradiol/E2) (PubMed:21808025). Interacts with NEDD8 (PubMed:21808025).</text>
</comment>
<comment type="interaction">
    <interactant intactId="EBI-7983651">
        <id>P06211</id>
    </interactant>
    <interactant intactId="EBI-917694">
        <id>P50503</id>
        <label>St13</label>
    </interactant>
    <organismsDiffer>false</organismsDiffer>
    <experiments>4</experiments>
</comment>
<comment type="interaction">
    <interactant intactId="EBI-7983651">
        <id>P06211</id>
    </interactant>
    <interactant intactId="EBI-7038538">
        <id>P62989</id>
        <label>Ubb</label>
    </interactant>
    <organismsDiffer>false</organismsDiffer>
    <experiments>5</experiments>
</comment>
<comment type="subcellular location">
    <subcellularLocation>
        <location evidence="4">Nucleus</location>
    </subcellularLocation>
    <subcellularLocation>
        <location evidence="1">Cytoplasm</location>
    </subcellularLocation>
    <subcellularLocation>
        <location evidence="1">Golgi apparatus</location>
    </subcellularLocation>
    <subcellularLocation>
        <location evidence="1">Cell membrane</location>
    </subcellularLocation>
    <text evidence="1">Colocalizes with ZDHHC7 and ZDHHC21 in the Golgi apparatus where most probably palmitoylation occurs. Associated with the plasma membrane when palmitoylated.</text>
</comment>
<comment type="tissue specificity">
    <text evidence="9">Expressed in the CA1 region of the hippocampus, expression decreases with age (at protein level) (PubMed:21808025). Expressed in the uterus (at protein level) (PubMed:21808025).</text>
</comment>
<comment type="domain">
    <text evidence="1">Composed of three domains: a modulating N-terminal domain, a DNA-binding domain and a C-terminal ligand-binding domain. The modulating domain, also known as A/B or AF-1 domain has a ligand-independent transactivation function. The C-terminus contains a ligand-dependent transactivation domain, also known as E/F or AF-2 domain which overlaps with the ligand binding domain. AF-1 and AF-2 activate transcription independently and synergistically and act in a promoter- and cell-specific manner (By similarity).</text>
</comment>
<comment type="PTM">
    <text evidence="2">Phosphorylated by cyclin A/CDK2 and CK1. Phosphorylation probably enhances transcriptional activity. Dephosphorylation at Ser-123 by PPP5C inhibits its transactivation activity (By similarity). Phosphorylated by LMTK3 (in vitro) (By similarity).</text>
</comment>
<comment type="PTM">
    <text evidence="2 9">Ubiquitinated; regulated by LATS1 via DCAF1 it leads to ESR1 proteasomal degradation (By similarity). Deubiquitinated by OTUB1 (By similarity). Ubiquitinated by STUB1/CHIP; in the CA1 hippocampal region following loss of endogenous circulating estradiol (17-beta-estradiol/E2) (PubMed:21808025). Ubiquitinated by UBR5, leading to its degradation: UBR5 specifically recognizes and binds ligand-bound ESR1 when it is not associated with coactivators (NCOAs) (By similarity). In presence of NCOAs, the UBR5-degron is not accessible, preventing its ubiquitination and degradation (By similarity).</text>
</comment>
<comment type="PTM">
    <text evidence="1">Palmitoylated at Cys-452 by ZDHHC7 and ZDHHC21. This modification is required for plasma membrane targeting and for rapid intracellular signaling via ERK and AKT kinases and cAMP generation, but not for signaling mediated by the nuclear hormone receptor (By similarity).</text>
</comment>
<comment type="PTM">
    <text evidence="2">Dimethylated by PRMT1 at Arg-265. The methylation may favor cytoplasmic localization. Demethylated by JMJD6 at Arg-265.</text>
</comment>
<comment type="miscellaneous">
    <text>In the absence of ligand, steroid hormone receptors are thought to be weakly associated with nuclear components; hormone binding greatly increases receptor affinity. The hormone-receptor complex appears to recognize discrete DNA sequences upstream of transcriptional start sites.</text>
</comment>
<comment type="similarity">
    <text evidence="10">Belongs to the nuclear hormone receptor family. NR3 subfamily.</text>
</comment>
<organism>
    <name type="scientific">Rattus norvegicus</name>
    <name type="common">Rat</name>
    <dbReference type="NCBI Taxonomy" id="10116"/>
    <lineage>
        <taxon>Eukaryota</taxon>
        <taxon>Metazoa</taxon>
        <taxon>Chordata</taxon>
        <taxon>Craniata</taxon>
        <taxon>Vertebrata</taxon>
        <taxon>Euteleostomi</taxon>
        <taxon>Mammalia</taxon>
        <taxon>Eutheria</taxon>
        <taxon>Euarchontoglires</taxon>
        <taxon>Glires</taxon>
        <taxon>Rodentia</taxon>
        <taxon>Myomorpha</taxon>
        <taxon>Muroidea</taxon>
        <taxon>Muridae</taxon>
        <taxon>Murinae</taxon>
        <taxon>Rattus</taxon>
    </lineage>
</organism>
<evidence type="ECO:0000250" key="1"/>
<evidence type="ECO:0000250" key="2">
    <source>
        <dbReference type="UniProtKB" id="P03372"/>
    </source>
</evidence>
<evidence type="ECO:0000250" key="3">
    <source>
        <dbReference type="UniProtKB" id="P19785"/>
    </source>
</evidence>
<evidence type="ECO:0000255" key="4">
    <source>
        <dbReference type="PROSITE-ProRule" id="PRU00407"/>
    </source>
</evidence>
<evidence type="ECO:0000255" key="5">
    <source>
        <dbReference type="PROSITE-ProRule" id="PRU01189"/>
    </source>
</evidence>
<evidence type="ECO:0000256" key="6">
    <source>
        <dbReference type="SAM" id="MobiDB-lite"/>
    </source>
</evidence>
<evidence type="ECO:0000269" key="7">
    <source>
    </source>
</evidence>
<evidence type="ECO:0000269" key="8">
    <source>
    </source>
</evidence>
<evidence type="ECO:0000269" key="9">
    <source>
    </source>
</evidence>
<evidence type="ECO:0000305" key="10"/>
<sequence>MTMTLHTKASGMALLHQIQGNELEPLNRPQLKMPMERALGEVYVDNSKPAVFNYPEGAAYEFNAAAAAAAAGASAPVYGQSSITYGPGSEAAAFGANSLGAFPQLNSVSPSPLMLLHPPPHVSPFLHPHGHQVPYYLENEPSAYAVRDTGPPAFYRSNSDNRRQNGRERLSSSSEKGNMIMESAKETRYCAVCNDYASGYHYGVWSCEGCKAFFKRSIQGHNDYMCPATNQCTIDKNRRKSCQACRLRKCYEVGMMKGGIRKDRRGGRMLKHKRQRDDLEGRNEMGTSGDMRAANLWPSPLVIKHTKKNSPALSLTADQMVSALLDAEPPLIYSEYDPSRPFSEASMMGLLTNLADRELVHMINWAKRVPGFGDLNLHDQVHLLECAWLEILMIGLVWRSMEHPGKLLFAPNLLLDRNQGKCVEGMVEIFDMLLATSSRFRMMNLQGEEFVCLKSIILLNSGVYTFLSSTLKSLEEKDHIHRVLDKINDTLIHLMAKAGLTLQQQHRRLAQLLLILSHIRHMSNKGMEHLYNMKCKNVVPLYDLLLEMLDAHRLHAPASRMGVPPEEPSQSQLTTTSSTSAHSLQTYYIPPEAEGFPNTI</sequence>
<feature type="chain" id="PRO_0000053623" description="Estrogen receptor">
    <location>
        <begin position="1"/>
        <end position="600"/>
    </location>
</feature>
<feature type="domain" description="NR LBD" evidence="5">
    <location>
        <begin position="316"/>
        <end position="552"/>
    </location>
</feature>
<feature type="DNA-binding region" description="Nuclear receptor" evidence="4">
    <location>
        <begin position="190"/>
        <end position="255"/>
    </location>
</feature>
<feature type="zinc finger region" description="NR C4-type" evidence="4">
    <location>
        <begin position="190"/>
        <end position="210"/>
    </location>
</feature>
<feature type="zinc finger region" description="NR C4-type" evidence="4">
    <location>
        <begin position="226"/>
        <end position="250"/>
    </location>
</feature>
<feature type="region of interest" description="Modulating (transactivation AF-1); mediates interaction with MACROD1" evidence="1">
    <location>
        <begin position="1"/>
        <end position="189"/>
    </location>
</feature>
<feature type="region of interest" description="Interaction with DDX5; self-association" evidence="1">
    <location>
        <begin position="35"/>
        <end position="179"/>
    </location>
</feature>
<feature type="region of interest" description="Required for interaction with NCOA1" evidence="1">
    <location>
        <begin position="35"/>
        <end position="47"/>
    </location>
</feature>
<feature type="region of interest" description="Disordered" evidence="6">
    <location>
        <begin position="148"/>
        <end position="177"/>
    </location>
</feature>
<feature type="region of interest" description="Mediates interaction with DNTTIP2" evidence="1">
    <location>
        <begin position="190"/>
        <end position="315"/>
    </location>
</feature>
<feature type="region of interest" description="Hinge">
    <location>
        <begin position="256"/>
        <end position="315"/>
    </location>
</feature>
<feature type="region of interest" description="Interaction with AKAP13" evidence="1">
    <location>
        <begin position="267"/>
        <end position="600"/>
    </location>
</feature>
<feature type="region of interest" description="Self-association" evidence="1">
    <location>
        <begin position="269"/>
        <end position="600"/>
    </location>
</feature>
<feature type="region of interest" description="Transactivation AF-2" evidence="1">
    <location>
        <begin position="316"/>
        <end position="600"/>
    </location>
</feature>
<feature type="region of interest" description="Disordered" evidence="6">
    <location>
        <begin position="558"/>
        <end position="581"/>
    </location>
</feature>
<feature type="compositionally biased region" description="Basic and acidic residues" evidence="6">
    <location>
        <begin position="159"/>
        <end position="170"/>
    </location>
</feature>
<feature type="compositionally biased region" description="Low complexity" evidence="6">
    <location>
        <begin position="569"/>
        <end position="581"/>
    </location>
</feature>
<feature type="binding site" evidence="2">
    <location>
        <position position="358"/>
    </location>
    <ligand>
        <name>17beta-estradiol</name>
        <dbReference type="ChEBI" id="CHEBI:16469"/>
    </ligand>
</feature>
<feature type="binding site" evidence="2">
    <location>
        <position position="399"/>
    </location>
    <ligand>
        <name>17beta-estradiol</name>
        <dbReference type="ChEBI" id="CHEBI:16469"/>
    </ligand>
</feature>
<feature type="binding site" evidence="2">
    <location>
        <position position="529"/>
    </location>
    <ligand>
        <name>17beta-estradiol</name>
        <dbReference type="ChEBI" id="CHEBI:16469"/>
    </ligand>
</feature>
<feature type="modified residue" description="Phosphoserine; by CDK2" evidence="2">
    <location>
        <position position="109"/>
    </location>
</feature>
<feature type="modified residue" description="Phosphoserine; by CDK2" evidence="2">
    <location>
        <position position="111"/>
    </location>
</feature>
<feature type="modified residue" description="Phosphoserine" evidence="2">
    <location>
        <position position="123"/>
    </location>
</feature>
<feature type="modified residue" description="Phosphoserine; by CK2" evidence="2">
    <location>
        <position position="172"/>
    </location>
</feature>
<feature type="modified residue" description="Asymmetric dimethylarginine; by PRMT1" evidence="2">
    <location>
        <position position="265"/>
    </location>
</feature>
<feature type="modified residue" description="Phosphotyrosine; by Tyr-kinases" evidence="2">
    <location>
        <position position="542"/>
    </location>
</feature>
<feature type="lipid moiety-binding region" description="S-palmitoyl cysteine" evidence="1">
    <location>
        <position position="452"/>
    </location>
</feature>
<feature type="glycosylation site" description="O-linked (GlcNAc) serine" evidence="1">
    <location>
        <position position="10"/>
    </location>
</feature>
<feature type="glycosylation site" description="O-linked (GlcNAc) threonine" evidence="1">
    <location>
        <position position="576"/>
    </location>
</feature>
<feature type="sequence conflict" description="In Ref. 3; CAA43411." evidence="10" ref="3">
    <original>N</original>
    <variation>T</variation>
    <location>
        <position position="488"/>
    </location>
</feature>
<proteinExistence type="evidence at protein level"/>
<name>ESR1_RAT</name>